<reference key="1">
    <citation type="submission" date="2006-06" db="EMBL/GenBank/DDBJ databases">
        <title>Complete sequence of Pseudoalteromonas atlantica T6c.</title>
        <authorList>
            <consortium name="US DOE Joint Genome Institute"/>
            <person name="Copeland A."/>
            <person name="Lucas S."/>
            <person name="Lapidus A."/>
            <person name="Barry K."/>
            <person name="Detter J.C."/>
            <person name="Glavina del Rio T."/>
            <person name="Hammon N."/>
            <person name="Israni S."/>
            <person name="Dalin E."/>
            <person name="Tice H."/>
            <person name="Pitluck S."/>
            <person name="Saunders E."/>
            <person name="Brettin T."/>
            <person name="Bruce D."/>
            <person name="Han C."/>
            <person name="Tapia R."/>
            <person name="Gilna P."/>
            <person name="Schmutz J."/>
            <person name="Larimer F."/>
            <person name="Land M."/>
            <person name="Hauser L."/>
            <person name="Kyrpides N."/>
            <person name="Kim E."/>
            <person name="Karls A.C."/>
            <person name="Bartlett D."/>
            <person name="Higgins B.P."/>
            <person name="Richardson P."/>
        </authorList>
    </citation>
    <scope>NUCLEOTIDE SEQUENCE [LARGE SCALE GENOMIC DNA]</scope>
    <source>
        <strain>T6c / ATCC BAA-1087</strain>
    </source>
</reference>
<accession>Q15QB2</accession>
<name>PDXA_PSEA6</name>
<keyword id="KW-0170">Cobalt</keyword>
<keyword id="KW-0963">Cytoplasm</keyword>
<keyword id="KW-0460">Magnesium</keyword>
<keyword id="KW-0479">Metal-binding</keyword>
<keyword id="KW-0520">NAD</keyword>
<keyword id="KW-0521">NADP</keyword>
<keyword id="KW-0560">Oxidoreductase</keyword>
<keyword id="KW-0664">Pyridoxine biosynthesis</keyword>
<keyword id="KW-0862">Zinc</keyword>
<evidence type="ECO:0000255" key="1">
    <source>
        <dbReference type="HAMAP-Rule" id="MF_00536"/>
    </source>
</evidence>
<comment type="function">
    <text evidence="1">Catalyzes the NAD(P)-dependent oxidation of 4-(phosphooxy)-L-threonine (HTP) into 2-amino-3-oxo-4-(phosphooxy)butyric acid which spontaneously decarboxylates to form 3-amino-2-oxopropyl phosphate (AHAP).</text>
</comment>
<comment type="catalytic activity">
    <reaction evidence="1">
        <text>4-(phosphooxy)-L-threonine + NAD(+) = 3-amino-2-oxopropyl phosphate + CO2 + NADH</text>
        <dbReference type="Rhea" id="RHEA:32275"/>
        <dbReference type="ChEBI" id="CHEBI:16526"/>
        <dbReference type="ChEBI" id="CHEBI:57279"/>
        <dbReference type="ChEBI" id="CHEBI:57540"/>
        <dbReference type="ChEBI" id="CHEBI:57945"/>
        <dbReference type="ChEBI" id="CHEBI:58452"/>
        <dbReference type="EC" id="1.1.1.262"/>
    </reaction>
</comment>
<comment type="cofactor">
    <cofactor evidence="1">
        <name>Zn(2+)</name>
        <dbReference type="ChEBI" id="CHEBI:29105"/>
    </cofactor>
    <cofactor evidence="1">
        <name>Mg(2+)</name>
        <dbReference type="ChEBI" id="CHEBI:18420"/>
    </cofactor>
    <cofactor evidence="1">
        <name>Co(2+)</name>
        <dbReference type="ChEBI" id="CHEBI:48828"/>
    </cofactor>
    <text evidence="1">Binds 1 divalent metal cation per subunit. Can use ions such as Zn(2+), Mg(2+) or Co(2+).</text>
</comment>
<comment type="pathway">
    <text evidence="1">Cofactor biosynthesis; pyridoxine 5'-phosphate biosynthesis; pyridoxine 5'-phosphate from D-erythrose 4-phosphate: step 4/5.</text>
</comment>
<comment type="subunit">
    <text evidence="1">Homodimer.</text>
</comment>
<comment type="subcellular location">
    <subcellularLocation>
        <location evidence="1">Cytoplasm</location>
    </subcellularLocation>
</comment>
<comment type="miscellaneous">
    <text evidence="1">The active site is located at the dimer interface.</text>
</comment>
<comment type="similarity">
    <text evidence="1">Belongs to the PdxA family.</text>
</comment>
<dbReference type="EC" id="1.1.1.262" evidence="1"/>
<dbReference type="EMBL" id="CP000388">
    <property type="protein sequence ID" value="ABG41926.1"/>
    <property type="molecule type" value="Genomic_DNA"/>
</dbReference>
<dbReference type="RefSeq" id="WP_011576155.1">
    <property type="nucleotide sequence ID" value="NC_008228.1"/>
</dbReference>
<dbReference type="SMR" id="Q15QB2"/>
<dbReference type="STRING" id="342610.Patl_3420"/>
<dbReference type="KEGG" id="pat:Patl_3420"/>
<dbReference type="eggNOG" id="COG1995">
    <property type="taxonomic scope" value="Bacteria"/>
</dbReference>
<dbReference type="HOGENOM" id="CLU_040168_1_0_6"/>
<dbReference type="OrthoDB" id="9801783at2"/>
<dbReference type="UniPathway" id="UPA00244">
    <property type="reaction ID" value="UER00312"/>
</dbReference>
<dbReference type="Proteomes" id="UP000001981">
    <property type="component" value="Chromosome"/>
</dbReference>
<dbReference type="GO" id="GO:0005737">
    <property type="term" value="C:cytoplasm"/>
    <property type="evidence" value="ECO:0007669"/>
    <property type="project" value="UniProtKB-SubCell"/>
</dbReference>
<dbReference type="GO" id="GO:0050570">
    <property type="term" value="F:4-hydroxythreonine-4-phosphate dehydrogenase activity"/>
    <property type="evidence" value="ECO:0007669"/>
    <property type="project" value="UniProtKB-UniRule"/>
</dbReference>
<dbReference type="GO" id="GO:0050897">
    <property type="term" value="F:cobalt ion binding"/>
    <property type="evidence" value="ECO:0007669"/>
    <property type="project" value="UniProtKB-UniRule"/>
</dbReference>
<dbReference type="GO" id="GO:0000287">
    <property type="term" value="F:magnesium ion binding"/>
    <property type="evidence" value="ECO:0007669"/>
    <property type="project" value="UniProtKB-UniRule"/>
</dbReference>
<dbReference type="GO" id="GO:0051287">
    <property type="term" value="F:NAD binding"/>
    <property type="evidence" value="ECO:0007669"/>
    <property type="project" value="InterPro"/>
</dbReference>
<dbReference type="GO" id="GO:0008270">
    <property type="term" value="F:zinc ion binding"/>
    <property type="evidence" value="ECO:0007669"/>
    <property type="project" value="UniProtKB-UniRule"/>
</dbReference>
<dbReference type="GO" id="GO:0042823">
    <property type="term" value="P:pyridoxal phosphate biosynthetic process"/>
    <property type="evidence" value="ECO:0007669"/>
    <property type="project" value="UniProtKB-UniRule"/>
</dbReference>
<dbReference type="GO" id="GO:0008615">
    <property type="term" value="P:pyridoxine biosynthetic process"/>
    <property type="evidence" value="ECO:0007669"/>
    <property type="project" value="UniProtKB-UniRule"/>
</dbReference>
<dbReference type="Gene3D" id="3.40.718.10">
    <property type="entry name" value="Isopropylmalate Dehydrogenase"/>
    <property type="match status" value="1"/>
</dbReference>
<dbReference type="HAMAP" id="MF_00536">
    <property type="entry name" value="PdxA"/>
    <property type="match status" value="1"/>
</dbReference>
<dbReference type="InterPro" id="IPR037510">
    <property type="entry name" value="PdxA"/>
</dbReference>
<dbReference type="InterPro" id="IPR005255">
    <property type="entry name" value="PdxA_fam"/>
</dbReference>
<dbReference type="NCBIfam" id="TIGR00557">
    <property type="entry name" value="pdxA"/>
    <property type="match status" value="1"/>
</dbReference>
<dbReference type="PANTHER" id="PTHR30004">
    <property type="entry name" value="4-HYDROXYTHREONINE-4-PHOSPHATE DEHYDROGENASE"/>
    <property type="match status" value="1"/>
</dbReference>
<dbReference type="PANTHER" id="PTHR30004:SF5">
    <property type="entry name" value="4-HYDROXYTHREONINE-4-PHOSPHATE DEHYDROGENASE"/>
    <property type="match status" value="1"/>
</dbReference>
<dbReference type="Pfam" id="PF04166">
    <property type="entry name" value="PdxA"/>
    <property type="match status" value="1"/>
</dbReference>
<dbReference type="SUPFAM" id="SSF53659">
    <property type="entry name" value="Isocitrate/Isopropylmalate dehydrogenase-like"/>
    <property type="match status" value="1"/>
</dbReference>
<organism>
    <name type="scientific">Pseudoalteromonas atlantica (strain T6c / ATCC BAA-1087)</name>
    <dbReference type="NCBI Taxonomy" id="3042615"/>
    <lineage>
        <taxon>Bacteria</taxon>
        <taxon>Pseudomonadati</taxon>
        <taxon>Pseudomonadota</taxon>
        <taxon>Gammaproteobacteria</taxon>
        <taxon>Alteromonadales</taxon>
        <taxon>Alteromonadaceae</taxon>
        <taxon>Paraglaciecola</taxon>
    </lineage>
</organism>
<sequence length="326" mass="35063">MTIKLAITPGEPAGVGPDLIITLAQQQWQAMLVVFANAELMRTRANELNIPLTLLPYDASRTDIQPAGSLYIVDIPLQDEVIAGKLNPTNSQYVLDTLHQACQMNLNGEFQALVTGPVHKGVINEAGIPFSGHTEFFAQQSNTPEVVMMLATEGLRVTLATTHIPVTAVSAAITQPKLDNVIRIIDHDLRTKFGIAKPHIFVCGLNPHAGEDGHIGREEIDTIIPALNALRQEGITLTGPLPADTIFNPKYLQQADTVLAMYHDQGLPVLKYKGFSQAVNITLGLPFIRTSVDHGTALDLAATGQADVGSFSIAIKEAISLAKSTQ</sequence>
<feature type="chain" id="PRO_1000128257" description="4-hydroxythreonine-4-phosphate dehydrogenase">
    <location>
        <begin position="1"/>
        <end position="326"/>
    </location>
</feature>
<feature type="binding site" evidence="1">
    <location>
        <position position="133"/>
    </location>
    <ligand>
        <name>substrate</name>
    </ligand>
</feature>
<feature type="binding site" evidence="1">
    <location>
        <position position="134"/>
    </location>
    <ligand>
        <name>substrate</name>
    </ligand>
</feature>
<feature type="binding site" evidence="1">
    <location>
        <position position="163"/>
    </location>
    <ligand>
        <name>a divalent metal cation</name>
        <dbReference type="ChEBI" id="CHEBI:60240"/>
        <note>ligand shared between dimeric partners</note>
    </ligand>
</feature>
<feature type="binding site" evidence="1">
    <location>
        <position position="208"/>
    </location>
    <ligand>
        <name>a divalent metal cation</name>
        <dbReference type="ChEBI" id="CHEBI:60240"/>
        <note>ligand shared between dimeric partners</note>
    </ligand>
</feature>
<feature type="binding site" evidence="1">
    <location>
        <position position="263"/>
    </location>
    <ligand>
        <name>a divalent metal cation</name>
        <dbReference type="ChEBI" id="CHEBI:60240"/>
        <note>ligand shared between dimeric partners</note>
    </ligand>
</feature>
<feature type="binding site" evidence="1">
    <location>
        <position position="271"/>
    </location>
    <ligand>
        <name>substrate</name>
    </ligand>
</feature>
<feature type="binding site" evidence="1">
    <location>
        <position position="280"/>
    </location>
    <ligand>
        <name>substrate</name>
    </ligand>
</feature>
<feature type="binding site" evidence="1">
    <location>
        <position position="289"/>
    </location>
    <ligand>
        <name>substrate</name>
    </ligand>
</feature>
<gene>
    <name evidence="1" type="primary">pdxA</name>
    <name type="ordered locus">Patl_3420</name>
</gene>
<protein>
    <recommendedName>
        <fullName evidence="1">4-hydroxythreonine-4-phosphate dehydrogenase</fullName>
        <ecNumber evidence="1">1.1.1.262</ecNumber>
    </recommendedName>
    <alternativeName>
        <fullName evidence="1">4-(phosphohydroxy)-L-threonine dehydrogenase</fullName>
    </alternativeName>
</protein>
<proteinExistence type="inferred from homology"/>